<accession>Q9PJK0</accession>
<sequence>MKYRTHKCNELSLNHVGEHVRLSGWVHRYRNHGGVVFIDLRDRFGITQIVCRQEENPELHRLMDQVRSEWVLCVEGLVCARLGGMENPNLVTGSIEVEVSHLEVLSRAQNLPFSISDEHINVNEELRLTYRYLDMRRGDIVDRLMCRHKVMLACRQYLDEQGFTEVVTPVLGKSTPEGARDYLVPSRIYPGNFYALPQSPQLFKQILMVGGLDRYFQIATCFRDEDLRADRQPEFSQIDMEMSFGGPEDLFPIVEELVTRLFAVKGIELSIPFQRMTYQEAKEFYGTDKPDLRFGLRLKNCCEYAKKFSFSIFLDQLAQGGTVKGFCVPGGADISRKQLDVYTDFVKRYGAMGLVWIKNQDGGISSNVAKFASEEVFHEMFEAFEAKDQDILLLIAAPEAIANQSLDHLRRLIAKERQLYDAEQYNFVWITDFPLFAKEEGELCSEHHPFTAPLEEDIPLLDKDPLSVRSSSYDLVLNGYEIASGSQRIHNPDLQNKIFSLLRLSQESVKEKFGFFIDALSFGTPPHLGIALGLDRIMMVLTGAETIREVIAFPKTQKAGDLMMSAPSEILPIQLKELGLKL</sequence>
<evidence type="ECO:0000255" key="1">
    <source>
        <dbReference type="HAMAP-Rule" id="MF_00044"/>
    </source>
</evidence>
<organism>
    <name type="scientific">Chlamydia muridarum (strain MoPn / Nigg)</name>
    <dbReference type="NCBI Taxonomy" id="243161"/>
    <lineage>
        <taxon>Bacteria</taxon>
        <taxon>Pseudomonadati</taxon>
        <taxon>Chlamydiota</taxon>
        <taxon>Chlamydiia</taxon>
        <taxon>Chlamydiales</taxon>
        <taxon>Chlamydiaceae</taxon>
        <taxon>Chlamydia/Chlamydophila group</taxon>
        <taxon>Chlamydia</taxon>
    </lineage>
</organism>
<dbReference type="EC" id="6.1.1.23" evidence="1"/>
<dbReference type="EMBL" id="AE002160">
    <property type="protein sequence ID" value="AAF39629.1"/>
    <property type="molecule type" value="Genomic_DNA"/>
</dbReference>
<dbReference type="PIR" id="E81660">
    <property type="entry name" value="E81660"/>
</dbReference>
<dbReference type="RefSeq" id="WP_010231701.1">
    <property type="nucleotide sequence ID" value="NZ_CP063055.1"/>
</dbReference>
<dbReference type="SMR" id="Q9PJK0"/>
<dbReference type="GeneID" id="1246197"/>
<dbReference type="KEGG" id="cmu:TC_0829"/>
<dbReference type="eggNOG" id="COG0173">
    <property type="taxonomic scope" value="Bacteria"/>
</dbReference>
<dbReference type="HOGENOM" id="CLU_014330_3_2_0"/>
<dbReference type="OrthoDB" id="9802326at2"/>
<dbReference type="Proteomes" id="UP000000800">
    <property type="component" value="Chromosome"/>
</dbReference>
<dbReference type="GO" id="GO:0005737">
    <property type="term" value="C:cytoplasm"/>
    <property type="evidence" value="ECO:0007669"/>
    <property type="project" value="UniProtKB-SubCell"/>
</dbReference>
<dbReference type="GO" id="GO:0004815">
    <property type="term" value="F:aspartate-tRNA ligase activity"/>
    <property type="evidence" value="ECO:0007669"/>
    <property type="project" value="UniProtKB-UniRule"/>
</dbReference>
<dbReference type="GO" id="GO:0050560">
    <property type="term" value="F:aspartate-tRNA(Asn) ligase activity"/>
    <property type="evidence" value="ECO:0007669"/>
    <property type="project" value="UniProtKB-EC"/>
</dbReference>
<dbReference type="GO" id="GO:0005524">
    <property type="term" value="F:ATP binding"/>
    <property type="evidence" value="ECO:0007669"/>
    <property type="project" value="UniProtKB-UniRule"/>
</dbReference>
<dbReference type="GO" id="GO:0003676">
    <property type="term" value="F:nucleic acid binding"/>
    <property type="evidence" value="ECO:0007669"/>
    <property type="project" value="InterPro"/>
</dbReference>
<dbReference type="GO" id="GO:0006422">
    <property type="term" value="P:aspartyl-tRNA aminoacylation"/>
    <property type="evidence" value="ECO:0007669"/>
    <property type="project" value="UniProtKB-UniRule"/>
</dbReference>
<dbReference type="CDD" id="cd00777">
    <property type="entry name" value="AspRS_core"/>
    <property type="match status" value="1"/>
</dbReference>
<dbReference type="CDD" id="cd04317">
    <property type="entry name" value="EcAspRS_like_N"/>
    <property type="match status" value="1"/>
</dbReference>
<dbReference type="Gene3D" id="3.30.930.10">
    <property type="entry name" value="Bira Bifunctional Protein, Domain 2"/>
    <property type="match status" value="1"/>
</dbReference>
<dbReference type="Gene3D" id="3.30.1360.30">
    <property type="entry name" value="GAD-like domain"/>
    <property type="match status" value="1"/>
</dbReference>
<dbReference type="Gene3D" id="2.40.50.140">
    <property type="entry name" value="Nucleic acid-binding proteins"/>
    <property type="match status" value="1"/>
</dbReference>
<dbReference type="HAMAP" id="MF_00044">
    <property type="entry name" value="Asp_tRNA_synth_type1"/>
    <property type="match status" value="1"/>
</dbReference>
<dbReference type="InterPro" id="IPR004364">
    <property type="entry name" value="Aa-tRNA-synt_II"/>
</dbReference>
<dbReference type="InterPro" id="IPR006195">
    <property type="entry name" value="aa-tRNA-synth_II"/>
</dbReference>
<dbReference type="InterPro" id="IPR045864">
    <property type="entry name" value="aa-tRNA-synth_II/BPL/LPL"/>
</dbReference>
<dbReference type="InterPro" id="IPR004524">
    <property type="entry name" value="Asp-tRNA-ligase_1"/>
</dbReference>
<dbReference type="InterPro" id="IPR047089">
    <property type="entry name" value="Asp-tRNA-ligase_1_N"/>
</dbReference>
<dbReference type="InterPro" id="IPR002312">
    <property type="entry name" value="Asp/Asn-tRNA-synth_IIb"/>
</dbReference>
<dbReference type="InterPro" id="IPR047090">
    <property type="entry name" value="AspRS_core"/>
</dbReference>
<dbReference type="InterPro" id="IPR004115">
    <property type="entry name" value="GAD-like_sf"/>
</dbReference>
<dbReference type="InterPro" id="IPR029351">
    <property type="entry name" value="GAD_dom"/>
</dbReference>
<dbReference type="InterPro" id="IPR012340">
    <property type="entry name" value="NA-bd_OB-fold"/>
</dbReference>
<dbReference type="InterPro" id="IPR004365">
    <property type="entry name" value="NA-bd_OB_tRNA"/>
</dbReference>
<dbReference type="NCBIfam" id="TIGR00459">
    <property type="entry name" value="aspS_bact"/>
    <property type="match status" value="1"/>
</dbReference>
<dbReference type="NCBIfam" id="NF001750">
    <property type="entry name" value="PRK00476.1"/>
    <property type="match status" value="1"/>
</dbReference>
<dbReference type="PANTHER" id="PTHR22594:SF5">
    <property type="entry name" value="ASPARTATE--TRNA LIGASE, MITOCHONDRIAL"/>
    <property type="match status" value="1"/>
</dbReference>
<dbReference type="PANTHER" id="PTHR22594">
    <property type="entry name" value="ASPARTYL/LYSYL-TRNA SYNTHETASE"/>
    <property type="match status" value="1"/>
</dbReference>
<dbReference type="Pfam" id="PF02938">
    <property type="entry name" value="GAD"/>
    <property type="match status" value="1"/>
</dbReference>
<dbReference type="Pfam" id="PF00152">
    <property type="entry name" value="tRNA-synt_2"/>
    <property type="match status" value="1"/>
</dbReference>
<dbReference type="Pfam" id="PF01336">
    <property type="entry name" value="tRNA_anti-codon"/>
    <property type="match status" value="1"/>
</dbReference>
<dbReference type="PRINTS" id="PR01042">
    <property type="entry name" value="TRNASYNTHASP"/>
</dbReference>
<dbReference type="SUPFAM" id="SSF55681">
    <property type="entry name" value="Class II aaRS and biotin synthetases"/>
    <property type="match status" value="1"/>
</dbReference>
<dbReference type="SUPFAM" id="SSF55261">
    <property type="entry name" value="GAD domain-like"/>
    <property type="match status" value="1"/>
</dbReference>
<dbReference type="SUPFAM" id="SSF50249">
    <property type="entry name" value="Nucleic acid-binding proteins"/>
    <property type="match status" value="1"/>
</dbReference>
<dbReference type="PROSITE" id="PS50862">
    <property type="entry name" value="AA_TRNA_LIGASE_II"/>
    <property type="match status" value="1"/>
</dbReference>
<proteinExistence type="inferred from homology"/>
<keyword id="KW-0030">Aminoacyl-tRNA synthetase</keyword>
<keyword id="KW-0067">ATP-binding</keyword>
<keyword id="KW-0963">Cytoplasm</keyword>
<keyword id="KW-0436">Ligase</keyword>
<keyword id="KW-0547">Nucleotide-binding</keyword>
<keyword id="KW-0648">Protein biosynthesis</keyword>
<protein>
    <recommendedName>
        <fullName evidence="1">Aspartate--tRNA(Asp/Asn) ligase</fullName>
        <ecNumber evidence="1">6.1.1.23</ecNumber>
    </recommendedName>
    <alternativeName>
        <fullName evidence="1">Aspartyl-tRNA synthetase</fullName>
        <shortName evidence="1">AspRS</shortName>
    </alternativeName>
    <alternativeName>
        <fullName evidence="1">Non-discriminating aspartyl-tRNA synthetase</fullName>
        <shortName evidence="1">ND-AspRS</shortName>
    </alternativeName>
</protein>
<comment type="function">
    <text evidence="1">Aspartyl-tRNA synthetase with relaxed tRNA specificity since it is able to aspartylate not only its cognate tRNA(Asp) but also tRNA(Asn). Reaction proceeds in two steps: L-aspartate is first activated by ATP to form Asp-AMP and then transferred to the acceptor end of tRNA(Asp/Asn).</text>
</comment>
<comment type="catalytic activity">
    <reaction evidence="1">
        <text>tRNA(Asx) + L-aspartate + ATP = L-aspartyl-tRNA(Asx) + AMP + diphosphate</text>
        <dbReference type="Rhea" id="RHEA:18349"/>
        <dbReference type="Rhea" id="RHEA-COMP:9710"/>
        <dbReference type="Rhea" id="RHEA-COMP:9711"/>
        <dbReference type="ChEBI" id="CHEBI:29991"/>
        <dbReference type="ChEBI" id="CHEBI:30616"/>
        <dbReference type="ChEBI" id="CHEBI:33019"/>
        <dbReference type="ChEBI" id="CHEBI:78442"/>
        <dbReference type="ChEBI" id="CHEBI:78516"/>
        <dbReference type="ChEBI" id="CHEBI:456215"/>
        <dbReference type="EC" id="6.1.1.23"/>
    </reaction>
</comment>
<comment type="subunit">
    <text evidence="1">Homodimer.</text>
</comment>
<comment type="subcellular location">
    <subcellularLocation>
        <location evidence="1">Cytoplasm</location>
    </subcellularLocation>
</comment>
<comment type="similarity">
    <text evidence="1">Belongs to the class-II aminoacyl-tRNA synthetase family. Type 1 subfamily.</text>
</comment>
<feature type="chain" id="PRO_0000110853" description="Aspartate--tRNA(Asp/Asn) ligase">
    <location>
        <begin position="1"/>
        <end position="582"/>
    </location>
</feature>
<feature type="region of interest" description="Aspartate" evidence="1">
    <location>
        <begin position="201"/>
        <end position="204"/>
    </location>
</feature>
<feature type="binding site" evidence="1">
    <location>
        <position position="177"/>
    </location>
    <ligand>
        <name>L-aspartate</name>
        <dbReference type="ChEBI" id="CHEBI:29991"/>
    </ligand>
</feature>
<feature type="binding site" evidence="1">
    <location>
        <begin position="223"/>
        <end position="225"/>
    </location>
    <ligand>
        <name>ATP</name>
        <dbReference type="ChEBI" id="CHEBI:30616"/>
    </ligand>
</feature>
<feature type="binding site" evidence="1">
    <location>
        <position position="223"/>
    </location>
    <ligand>
        <name>L-aspartate</name>
        <dbReference type="ChEBI" id="CHEBI:29991"/>
    </ligand>
</feature>
<feature type="binding site" evidence="1">
    <location>
        <position position="232"/>
    </location>
    <ligand>
        <name>ATP</name>
        <dbReference type="ChEBI" id="CHEBI:30616"/>
    </ligand>
</feature>
<feature type="binding site" evidence="1">
    <location>
        <position position="447"/>
    </location>
    <ligand>
        <name>L-aspartate</name>
        <dbReference type="ChEBI" id="CHEBI:29991"/>
    </ligand>
</feature>
<feature type="binding site" evidence="1">
    <location>
        <position position="481"/>
    </location>
    <ligand>
        <name>ATP</name>
        <dbReference type="ChEBI" id="CHEBI:30616"/>
    </ligand>
</feature>
<feature type="binding site" evidence="1">
    <location>
        <position position="488"/>
    </location>
    <ligand>
        <name>L-aspartate</name>
        <dbReference type="ChEBI" id="CHEBI:29991"/>
    </ligand>
</feature>
<feature type="binding site" evidence="1">
    <location>
        <begin position="533"/>
        <end position="536"/>
    </location>
    <ligand>
        <name>ATP</name>
        <dbReference type="ChEBI" id="CHEBI:30616"/>
    </ligand>
</feature>
<feature type="site" description="Important for tRNA non-discrimination" evidence="1">
    <location>
        <position position="32"/>
    </location>
</feature>
<feature type="site" description="Important for tRNA non-discrimination" evidence="1">
    <location>
        <position position="84"/>
    </location>
</feature>
<reference key="1">
    <citation type="journal article" date="2000" name="Nucleic Acids Res.">
        <title>Genome sequences of Chlamydia trachomatis MoPn and Chlamydia pneumoniae AR39.</title>
        <authorList>
            <person name="Read T.D."/>
            <person name="Brunham R.C."/>
            <person name="Shen C."/>
            <person name="Gill S.R."/>
            <person name="Heidelberg J.F."/>
            <person name="White O."/>
            <person name="Hickey E.K."/>
            <person name="Peterson J.D."/>
            <person name="Utterback T.R."/>
            <person name="Berry K.J."/>
            <person name="Bass S."/>
            <person name="Linher K.D."/>
            <person name="Weidman J.F."/>
            <person name="Khouri H.M."/>
            <person name="Craven B."/>
            <person name="Bowman C."/>
            <person name="Dodson R.J."/>
            <person name="Gwinn M.L."/>
            <person name="Nelson W.C."/>
            <person name="DeBoy R.T."/>
            <person name="Kolonay J.F."/>
            <person name="McClarty G."/>
            <person name="Salzberg S.L."/>
            <person name="Eisen J.A."/>
            <person name="Fraser C.M."/>
        </authorList>
    </citation>
    <scope>NUCLEOTIDE SEQUENCE [LARGE SCALE GENOMIC DNA]</scope>
    <source>
        <strain>MoPn / Nigg</strain>
    </source>
</reference>
<gene>
    <name evidence="1" type="primary">aspS</name>
    <name type="ordered locus">TC_0829</name>
</gene>
<name>SYDND_CHLMU</name>